<accession>B7V1Z5</accession>
<proteinExistence type="inferred from homology"/>
<name>RL9_PSEA8</name>
<dbReference type="EMBL" id="FM209186">
    <property type="protein sequence ID" value="CAW30072.1"/>
    <property type="molecule type" value="Genomic_DNA"/>
</dbReference>
<dbReference type="RefSeq" id="WP_003095627.1">
    <property type="nucleotide sequence ID" value="NC_011770.1"/>
</dbReference>
<dbReference type="SMR" id="B7V1Z5"/>
<dbReference type="GeneID" id="77223479"/>
<dbReference type="KEGG" id="pag:PLES_53181"/>
<dbReference type="HOGENOM" id="CLU_078938_4_1_6"/>
<dbReference type="GO" id="GO:1990904">
    <property type="term" value="C:ribonucleoprotein complex"/>
    <property type="evidence" value="ECO:0007669"/>
    <property type="project" value="UniProtKB-KW"/>
</dbReference>
<dbReference type="GO" id="GO:0005840">
    <property type="term" value="C:ribosome"/>
    <property type="evidence" value="ECO:0007669"/>
    <property type="project" value="UniProtKB-KW"/>
</dbReference>
<dbReference type="GO" id="GO:0019843">
    <property type="term" value="F:rRNA binding"/>
    <property type="evidence" value="ECO:0007669"/>
    <property type="project" value="UniProtKB-UniRule"/>
</dbReference>
<dbReference type="GO" id="GO:0003735">
    <property type="term" value="F:structural constituent of ribosome"/>
    <property type="evidence" value="ECO:0007669"/>
    <property type="project" value="InterPro"/>
</dbReference>
<dbReference type="GO" id="GO:0006412">
    <property type="term" value="P:translation"/>
    <property type="evidence" value="ECO:0007669"/>
    <property type="project" value="UniProtKB-UniRule"/>
</dbReference>
<dbReference type="FunFam" id="3.40.5.10:FF:000001">
    <property type="entry name" value="50S ribosomal protein L9"/>
    <property type="match status" value="1"/>
</dbReference>
<dbReference type="Gene3D" id="3.10.430.100">
    <property type="entry name" value="Ribosomal protein L9, C-terminal domain"/>
    <property type="match status" value="1"/>
</dbReference>
<dbReference type="Gene3D" id="3.40.5.10">
    <property type="entry name" value="Ribosomal protein L9, N-terminal domain"/>
    <property type="match status" value="1"/>
</dbReference>
<dbReference type="HAMAP" id="MF_00503">
    <property type="entry name" value="Ribosomal_bL9"/>
    <property type="match status" value="1"/>
</dbReference>
<dbReference type="InterPro" id="IPR000244">
    <property type="entry name" value="Ribosomal_bL9"/>
</dbReference>
<dbReference type="InterPro" id="IPR009027">
    <property type="entry name" value="Ribosomal_bL9/RNase_H1_N"/>
</dbReference>
<dbReference type="InterPro" id="IPR020594">
    <property type="entry name" value="Ribosomal_bL9_bac/chp"/>
</dbReference>
<dbReference type="InterPro" id="IPR020069">
    <property type="entry name" value="Ribosomal_bL9_C"/>
</dbReference>
<dbReference type="InterPro" id="IPR036791">
    <property type="entry name" value="Ribosomal_bL9_C_sf"/>
</dbReference>
<dbReference type="InterPro" id="IPR020070">
    <property type="entry name" value="Ribosomal_bL9_N"/>
</dbReference>
<dbReference type="InterPro" id="IPR036935">
    <property type="entry name" value="Ribosomal_bL9_N_sf"/>
</dbReference>
<dbReference type="NCBIfam" id="TIGR00158">
    <property type="entry name" value="L9"/>
    <property type="match status" value="1"/>
</dbReference>
<dbReference type="PANTHER" id="PTHR21368">
    <property type="entry name" value="50S RIBOSOMAL PROTEIN L9"/>
    <property type="match status" value="1"/>
</dbReference>
<dbReference type="Pfam" id="PF03948">
    <property type="entry name" value="Ribosomal_L9_C"/>
    <property type="match status" value="1"/>
</dbReference>
<dbReference type="Pfam" id="PF01281">
    <property type="entry name" value="Ribosomal_L9_N"/>
    <property type="match status" value="1"/>
</dbReference>
<dbReference type="SUPFAM" id="SSF55658">
    <property type="entry name" value="L9 N-domain-like"/>
    <property type="match status" value="1"/>
</dbReference>
<dbReference type="SUPFAM" id="SSF55653">
    <property type="entry name" value="Ribosomal protein L9 C-domain"/>
    <property type="match status" value="1"/>
</dbReference>
<dbReference type="PROSITE" id="PS00651">
    <property type="entry name" value="RIBOSOMAL_L9"/>
    <property type="match status" value="1"/>
</dbReference>
<comment type="function">
    <text evidence="1">Binds to the 23S rRNA.</text>
</comment>
<comment type="similarity">
    <text evidence="1">Belongs to the bacterial ribosomal protein bL9 family.</text>
</comment>
<keyword id="KW-0687">Ribonucleoprotein</keyword>
<keyword id="KW-0689">Ribosomal protein</keyword>
<keyword id="KW-0694">RNA-binding</keyword>
<keyword id="KW-0699">rRNA-binding</keyword>
<evidence type="ECO:0000255" key="1">
    <source>
        <dbReference type="HAMAP-Rule" id="MF_00503"/>
    </source>
</evidence>
<evidence type="ECO:0000305" key="2"/>
<protein>
    <recommendedName>
        <fullName evidence="1">Large ribosomal subunit protein bL9</fullName>
    </recommendedName>
    <alternativeName>
        <fullName evidence="2">50S ribosomal protein L9</fullName>
    </alternativeName>
</protein>
<gene>
    <name evidence="1" type="primary">rplI</name>
    <name type="ordered locus">PLES_53181</name>
</gene>
<sequence>MEVILLEKVANLGNLGDKVNIKGGYARNFLLPQGKATVATAENVAAFEARRAELEKAAAEKKAAAEARAAQLSELVVTLGAHAGDEGKLFGSIGTRDIAEAVSAAGYPLEKAEVRLPNGALRNTGEFDVAVHLHTDVETTLKLIIVAE</sequence>
<organism>
    <name type="scientific">Pseudomonas aeruginosa (strain LESB58)</name>
    <dbReference type="NCBI Taxonomy" id="557722"/>
    <lineage>
        <taxon>Bacteria</taxon>
        <taxon>Pseudomonadati</taxon>
        <taxon>Pseudomonadota</taxon>
        <taxon>Gammaproteobacteria</taxon>
        <taxon>Pseudomonadales</taxon>
        <taxon>Pseudomonadaceae</taxon>
        <taxon>Pseudomonas</taxon>
    </lineage>
</organism>
<reference key="1">
    <citation type="journal article" date="2009" name="Genome Res.">
        <title>Newly introduced genomic prophage islands are critical determinants of in vivo competitiveness in the Liverpool epidemic strain of Pseudomonas aeruginosa.</title>
        <authorList>
            <person name="Winstanley C."/>
            <person name="Langille M.G.I."/>
            <person name="Fothergill J.L."/>
            <person name="Kukavica-Ibrulj I."/>
            <person name="Paradis-Bleau C."/>
            <person name="Sanschagrin F."/>
            <person name="Thomson N.R."/>
            <person name="Winsor G.L."/>
            <person name="Quail M.A."/>
            <person name="Lennard N."/>
            <person name="Bignell A."/>
            <person name="Clarke L."/>
            <person name="Seeger K."/>
            <person name="Saunders D."/>
            <person name="Harris D."/>
            <person name="Parkhill J."/>
            <person name="Hancock R.E.W."/>
            <person name="Brinkman F.S.L."/>
            <person name="Levesque R.C."/>
        </authorList>
    </citation>
    <scope>NUCLEOTIDE SEQUENCE [LARGE SCALE GENOMIC DNA]</scope>
    <source>
        <strain>LESB58</strain>
    </source>
</reference>
<feature type="chain" id="PRO_1000126956" description="Large ribosomal subunit protein bL9">
    <location>
        <begin position="1"/>
        <end position="148"/>
    </location>
</feature>